<evidence type="ECO:0000305" key="1"/>
<dbReference type="EMBL" id="U43400">
    <property type="protein sequence ID" value="AAC54671.1"/>
    <property type="molecule type" value="Genomic_DNA"/>
</dbReference>
<dbReference type="PIR" id="T41911">
    <property type="entry name" value="T41911"/>
</dbReference>
<dbReference type="RefSeq" id="YP_073751.1">
    <property type="nucleotide sequence ID" value="NC_001716.2"/>
</dbReference>
<dbReference type="SMR" id="P52524"/>
<dbReference type="DNASU" id="3289469"/>
<dbReference type="GeneID" id="3289469"/>
<dbReference type="KEGG" id="vg:3289469"/>
<dbReference type="Proteomes" id="UP000009246">
    <property type="component" value="Segment"/>
</dbReference>
<dbReference type="InterPro" id="IPR007578">
    <property type="entry name" value="Herpes_U10"/>
</dbReference>
<dbReference type="Pfam" id="PF04489">
    <property type="entry name" value="DUF570"/>
    <property type="match status" value="1"/>
</dbReference>
<feature type="chain" id="PRO_0000116320" description="U10 protein">
    <location>
        <begin position="1"/>
        <end position="451"/>
    </location>
</feature>
<organism>
    <name type="scientific">Human herpesvirus 7 (strain JI)</name>
    <name type="common">HHV-7</name>
    <name type="synonym">Human T lymphotropic virus</name>
    <dbReference type="NCBI Taxonomy" id="57278"/>
    <lineage>
        <taxon>Viruses</taxon>
        <taxon>Duplodnaviria</taxon>
        <taxon>Heunggongvirae</taxon>
        <taxon>Peploviricota</taxon>
        <taxon>Herviviricetes</taxon>
        <taxon>Herpesvirales</taxon>
        <taxon>Orthoherpesviridae</taxon>
        <taxon>Betaherpesvirinae</taxon>
        <taxon>Roseolovirus</taxon>
        <taxon>Roseolovirus humanbeta7</taxon>
        <taxon>Human betaherpesvirus 7</taxon>
    </lineage>
</organism>
<protein>
    <recommendedName>
        <fullName>U10 protein</fullName>
    </recommendedName>
</protein>
<name>VU10_HHV7J</name>
<comment type="similarity">
    <text evidence="1">Belongs to the herpesviridae U10 family.</text>
</comment>
<sequence>MAIAESGAFEINVNLGKSIASIQKNPIIYMRRHLSFYVELLKFIIHQYEQCFLPPKGTILYHNGLIELNTLIIDLNQQITSKQQIYSWTSITLPKIFSTKELYFIVASPESENITLNPAVTKGGWLSGSFSFPLSLSCAYALTGVSSTIYMLPFIPYKFPMTYVDFSTLRTYEVTSEYGSIQIIKQRNFLFLGIIRDLSWKSQRDNKNFILKAMFVGNWLGIQIPEAFALRLFNNTRFSIQDFEFSINIQNINLTRDNKILGSLSTVSCDQMPPNLSPENLPNYLVIQFELVSTLANPDHLLFSCNPKLFFTGDILNSAINLQHSPNHYELTVYAPHNLHFYPSCFHIVTLPIQFSSRNDRQMLVSSYPNEGYFEVQMCPWVQNSPLQIVIKSFSKNLVLPQGTPIAILLYMEKMTTGKNSLRDQELKINKDITRIGNVNLPKENFLHYNS</sequence>
<gene>
    <name type="primary">U10</name>
</gene>
<proteinExistence type="inferred from homology"/>
<organismHost>
    <name type="scientific">Homo sapiens</name>
    <name type="common">Human</name>
    <dbReference type="NCBI Taxonomy" id="9606"/>
</organismHost>
<accession>P52524</accession>
<keyword id="KW-1185">Reference proteome</keyword>
<reference key="1">
    <citation type="journal article" date="1996" name="J. Virol.">
        <title>Determination and analysis of the complete nucleotide sequence of human herpesvirus.</title>
        <authorList>
            <person name="Nicholas J."/>
        </authorList>
    </citation>
    <scope>NUCLEOTIDE SEQUENCE [LARGE SCALE GENOMIC DNA]</scope>
</reference>